<gene>
    <name evidence="1" type="primary">gap</name>
    <name type="ordered locus">TON_0639</name>
</gene>
<name>G3P_THEON</name>
<organism>
    <name type="scientific">Thermococcus onnurineus (strain NA1)</name>
    <dbReference type="NCBI Taxonomy" id="523850"/>
    <lineage>
        <taxon>Archaea</taxon>
        <taxon>Methanobacteriati</taxon>
        <taxon>Methanobacteriota</taxon>
        <taxon>Thermococci</taxon>
        <taxon>Thermococcales</taxon>
        <taxon>Thermococcaceae</taxon>
        <taxon>Thermococcus</taxon>
    </lineage>
</organism>
<proteinExistence type="inferred from homology"/>
<dbReference type="EC" id="1.2.1.59" evidence="1"/>
<dbReference type="EMBL" id="CP000855">
    <property type="protein sequence ID" value="ACJ16126.1"/>
    <property type="molecule type" value="Genomic_DNA"/>
</dbReference>
<dbReference type="RefSeq" id="WP_012571598.1">
    <property type="nucleotide sequence ID" value="NC_011529.1"/>
</dbReference>
<dbReference type="SMR" id="B6YUU0"/>
<dbReference type="STRING" id="523850.TON_0639"/>
<dbReference type="GeneID" id="7016938"/>
<dbReference type="KEGG" id="ton:TON_0639"/>
<dbReference type="PATRIC" id="fig|523850.10.peg.641"/>
<dbReference type="eggNOG" id="arCOG00493">
    <property type="taxonomic scope" value="Archaea"/>
</dbReference>
<dbReference type="HOGENOM" id="CLU_069533_0_0_2"/>
<dbReference type="OrthoDB" id="295712at2157"/>
<dbReference type="UniPathway" id="UPA00109">
    <property type="reaction ID" value="UER00184"/>
</dbReference>
<dbReference type="Proteomes" id="UP000002727">
    <property type="component" value="Chromosome"/>
</dbReference>
<dbReference type="GO" id="GO:0005737">
    <property type="term" value="C:cytoplasm"/>
    <property type="evidence" value="ECO:0007669"/>
    <property type="project" value="UniProtKB-SubCell"/>
</dbReference>
<dbReference type="GO" id="GO:0008839">
    <property type="term" value="F:4-hydroxy-tetrahydrodipicolinate reductase"/>
    <property type="evidence" value="ECO:0007669"/>
    <property type="project" value="InterPro"/>
</dbReference>
<dbReference type="GO" id="GO:0004365">
    <property type="term" value="F:glyceraldehyde-3-phosphate dehydrogenase (NAD+) (phosphorylating) activity"/>
    <property type="evidence" value="ECO:0007669"/>
    <property type="project" value="UniProtKB-UniRule"/>
</dbReference>
<dbReference type="GO" id="GO:0047100">
    <property type="term" value="F:glyceraldehyde-3-phosphate dehydrogenase (NADP+) (phosphorylating) activity"/>
    <property type="evidence" value="ECO:0007669"/>
    <property type="project" value="RHEA"/>
</dbReference>
<dbReference type="GO" id="GO:0051287">
    <property type="term" value="F:NAD binding"/>
    <property type="evidence" value="ECO:0007669"/>
    <property type="project" value="InterPro"/>
</dbReference>
<dbReference type="GO" id="GO:0050661">
    <property type="term" value="F:NADP binding"/>
    <property type="evidence" value="ECO:0007669"/>
    <property type="project" value="InterPro"/>
</dbReference>
<dbReference type="GO" id="GO:0006096">
    <property type="term" value="P:glycolytic process"/>
    <property type="evidence" value="ECO:0007669"/>
    <property type="project" value="UniProtKB-UniRule"/>
</dbReference>
<dbReference type="GO" id="GO:0009089">
    <property type="term" value="P:lysine biosynthetic process via diaminopimelate"/>
    <property type="evidence" value="ECO:0007669"/>
    <property type="project" value="InterPro"/>
</dbReference>
<dbReference type="CDD" id="cd18127">
    <property type="entry name" value="GAPDH_II_C"/>
    <property type="match status" value="1"/>
</dbReference>
<dbReference type="CDD" id="cd02278">
    <property type="entry name" value="GAPDH_II_N"/>
    <property type="match status" value="1"/>
</dbReference>
<dbReference type="Gene3D" id="3.30.360.10">
    <property type="entry name" value="Dihydrodipicolinate Reductase, domain 2"/>
    <property type="match status" value="1"/>
</dbReference>
<dbReference type="Gene3D" id="3.40.50.720">
    <property type="entry name" value="NAD(P)-binding Rossmann-like Domain"/>
    <property type="match status" value="1"/>
</dbReference>
<dbReference type="HAMAP" id="MF_00559">
    <property type="entry name" value="G3P_dehdrog_arch"/>
    <property type="match status" value="1"/>
</dbReference>
<dbReference type="InterPro" id="IPR000846">
    <property type="entry name" value="DapB_N"/>
</dbReference>
<dbReference type="InterPro" id="IPR020831">
    <property type="entry name" value="GlycerAld/Erythrose_P_DH"/>
</dbReference>
<dbReference type="InterPro" id="IPR020830">
    <property type="entry name" value="GlycerAld_3-P_DH_AS"/>
</dbReference>
<dbReference type="InterPro" id="IPR020829">
    <property type="entry name" value="GlycerAld_3-P_DH_cat"/>
</dbReference>
<dbReference type="InterPro" id="IPR020828">
    <property type="entry name" value="GlycerAld_3-P_DH_NAD(P)-bd"/>
</dbReference>
<dbReference type="InterPro" id="IPR006436">
    <property type="entry name" value="Glyceraldehyde-3-P_DH_2_arc"/>
</dbReference>
<dbReference type="InterPro" id="IPR036291">
    <property type="entry name" value="NAD(P)-bd_dom_sf"/>
</dbReference>
<dbReference type="NCBIfam" id="TIGR01546">
    <property type="entry name" value="GAPDH-II_archae"/>
    <property type="match status" value="1"/>
</dbReference>
<dbReference type="NCBIfam" id="NF003251">
    <property type="entry name" value="PRK04207.1"/>
    <property type="match status" value="1"/>
</dbReference>
<dbReference type="Pfam" id="PF01113">
    <property type="entry name" value="DapB_N"/>
    <property type="match status" value="1"/>
</dbReference>
<dbReference type="Pfam" id="PF02800">
    <property type="entry name" value="Gp_dh_C"/>
    <property type="match status" value="1"/>
</dbReference>
<dbReference type="PIRSF" id="PIRSF000149">
    <property type="entry name" value="GAP_DH"/>
    <property type="match status" value="1"/>
</dbReference>
<dbReference type="SMART" id="SM00846">
    <property type="entry name" value="Gp_dh_N"/>
    <property type="match status" value="1"/>
</dbReference>
<dbReference type="SUPFAM" id="SSF55347">
    <property type="entry name" value="Glyceraldehyde-3-phosphate dehydrogenase-like, C-terminal domain"/>
    <property type="match status" value="1"/>
</dbReference>
<dbReference type="SUPFAM" id="SSF51735">
    <property type="entry name" value="NAD(P)-binding Rossmann-fold domains"/>
    <property type="match status" value="1"/>
</dbReference>
<dbReference type="PROSITE" id="PS00071">
    <property type="entry name" value="GAPDH"/>
    <property type="match status" value="1"/>
</dbReference>
<comment type="catalytic activity">
    <reaction evidence="1">
        <text>D-glyceraldehyde 3-phosphate + phosphate + NADP(+) = (2R)-3-phospho-glyceroyl phosphate + NADPH + H(+)</text>
        <dbReference type="Rhea" id="RHEA:10296"/>
        <dbReference type="ChEBI" id="CHEBI:15378"/>
        <dbReference type="ChEBI" id="CHEBI:43474"/>
        <dbReference type="ChEBI" id="CHEBI:57604"/>
        <dbReference type="ChEBI" id="CHEBI:57783"/>
        <dbReference type="ChEBI" id="CHEBI:58349"/>
        <dbReference type="ChEBI" id="CHEBI:59776"/>
        <dbReference type="EC" id="1.2.1.59"/>
    </reaction>
</comment>
<comment type="catalytic activity">
    <reaction evidence="1">
        <text>D-glyceraldehyde 3-phosphate + phosphate + NAD(+) = (2R)-3-phospho-glyceroyl phosphate + NADH + H(+)</text>
        <dbReference type="Rhea" id="RHEA:10300"/>
        <dbReference type="ChEBI" id="CHEBI:15378"/>
        <dbReference type="ChEBI" id="CHEBI:43474"/>
        <dbReference type="ChEBI" id="CHEBI:57540"/>
        <dbReference type="ChEBI" id="CHEBI:57604"/>
        <dbReference type="ChEBI" id="CHEBI:57945"/>
        <dbReference type="ChEBI" id="CHEBI:59776"/>
        <dbReference type="EC" id="1.2.1.59"/>
    </reaction>
</comment>
<comment type="pathway">
    <text evidence="1">Carbohydrate degradation; glycolysis; pyruvate from D-glyceraldehyde 3-phosphate: step 1/5.</text>
</comment>
<comment type="subunit">
    <text evidence="1">Homotetramer.</text>
</comment>
<comment type="subcellular location">
    <subcellularLocation>
        <location evidence="1">Cytoplasm</location>
    </subcellularLocation>
</comment>
<comment type="similarity">
    <text evidence="1">Belongs to the glyceraldehyde-3-phosphate dehydrogenase family.</text>
</comment>
<accession>B6YUU0</accession>
<sequence>MKVKVGINGYGTIGKRVAYAVTRQDDMKLIGVTKTKPDFEAYRAKELGIPVYAAGEEFLPRFENAGFEVAGTLSDLLEKVDVIVDATPGGMGAKNKAVYEKAGVKAIFQGGEKASTAEVSFVAQANYEKALGKDYVRVVSCNTTGLIRTLSAVQEYIDYVYAVMIRRAADPNDIKHGPINAIKPSVTVPSHHGPDVQTVIPINIETSAFVVPTTIMHVHSIMVELKKPLEAKDVIDIFENTTRVLLFEKEKGFESTAQLIEFARDLHREWNNLYEIAVWKESISVRGNRLFYIQAVHQESDVVPENIDAIRAMFEMADKWESIRKTNQSLGILK</sequence>
<feature type="chain" id="PRO_1000129248" description="Glyceraldehyde-3-phosphate dehydrogenase">
    <location>
        <begin position="1"/>
        <end position="334"/>
    </location>
</feature>
<feature type="active site" description="Nucleophile" evidence="1">
    <location>
        <position position="141"/>
    </location>
</feature>
<feature type="binding site" evidence="1">
    <location>
        <begin position="12"/>
        <end position="13"/>
    </location>
    <ligand>
        <name>NAD(+)</name>
        <dbReference type="ChEBI" id="CHEBI:57540"/>
    </ligand>
</feature>
<feature type="binding site" evidence="1">
    <location>
        <position position="111"/>
    </location>
    <ligand>
        <name>NAD(+)</name>
        <dbReference type="ChEBI" id="CHEBI:57540"/>
    </ligand>
</feature>
<feature type="binding site" evidence="1">
    <location>
        <begin position="140"/>
        <end position="142"/>
    </location>
    <ligand>
        <name>D-glyceraldehyde 3-phosphate</name>
        <dbReference type="ChEBI" id="CHEBI:59776"/>
    </ligand>
</feature>
<feature type="binding site" evidence="1">
    <location>
        <position position="167"/>
    </location>
    <ligand>
        <name>NAD(+)</name>
        <dbReference type="ChEBI" id="CHEBI:57540"/>
    </ligand>
</feature>
<feature type="binding site" evidence="1">
    <location>
        <begin position="192"/>
        <end position="193"/>
    </location>
    <ligand>
        <name>D-glyceraldehyde 3-phosphate</name>
        <dbReference type="ChEBI" id="CHEBI:59776"/>
    </ligand>
</feature>
<feature type="binding site" evidence="1">
    <location>
        <position position="298"/>
    </location>
    <ligand>
        <name>NAD(+)</name>
        <dbReference type="ChEBI" id="CHEBI:57540"/>
    </ligand>
</feature>
<evidence type="ECO:0000255" key="1">
    <source>
        <dbReference type="HAMAP-Rule" id="MF_00559"/>
    </source>
</evidence>
<reference key="1">
    <citation type="journal article" date="2008" name="J. Bacteriol.">
        <title>The complete genome sequence of Thermococcus onnurineus NA1 reveals a mixed heterotrophic and carboxydotrophic metabolism.</title>
        <authorList>
            <person name="Lee H.S."/>
            <person name="Kang S.G."/>
            <person name="Bae S.S."/>
            <person name="Lim J.K."/>
            <person name="Cho Y."/>
            <person name="Kim Y.J."/>
            <person name="Jeon J.H."/>
            <person name="Cha S.-S."/>
            <person name="Kwon K.K."/>
            <person name="Kim H.-T."/>
            <person name="Park C.-J."/>
            <person name="Lee H.-W."/>
            <person name="Kim S.I."/>
            <person name="Chun J."/>
            <person name="Colwell R.R."/>
            <person name="Kim S.-J."/>
            <person name="Lee J.-H."/>
        </authorList>
    </citation>
    <scope>NUCLEOTIDE SEQUENCE [LARGE SCALE GENOMIC DNA]</scope>
    <source>
        <strain>NA1</strain>
    </source>
</reference>
<protein>
    <recommendedName>
        <fullName evidence="1">Glyceraldehyde-3-phosphate dehydrogenase</fullName>
        <shortName evidence="1">GAPDH</shortName>
        <ecNumber evidence="1">1.2.1.59</ecNumber>
    </recommendedName>
    <alternativeName>
        <fullName evidence="1">NAD(P)-dependent glyceraldehyde-3-phosphate dehydrogenase</fullName>
    </alternativeName>
</protein>
<keyword id="KW-0963">Cytoplasm</keyword>
<keyword id="KW-0324">Glycolysis</keyword>
<keyword id="KW-0520">NAD</keyword>
<keyword id="KW-0521">NADP</keyword>
<keyword id="KW-0560">Oxidoreductase</keyword>